<keyword id="KW-0488">Methylation</keyword>
<keyword id="KW-0687">Ribonucleoprotein</keyword>
<keyword id="KW-0689">Ribosomal protein</keyword>
<keyword id="KW-0694">RNA-binding</keyword>
<keyword id="KW-0699">rRNA-binding</keyword>
<comment type="function">
    <text evidence="1">Forms part of the ribosomal stalk which helps the ribosome interact with GTP-bound translation factors.</text>
</comment>
<comment type="subunit">
    <text evidence="1">Part of the ribosomal stalk of the 50S ribosomal subunit. Interacts with L10 and the large rRNA to form the base of the stalk. L10 forms an elongated spine to which L12 dimers bind in a sequential fashion forming a multimeric L10(L12)X complex.</text>
</comment>
<comment type="PTM">
    <text evidence="1">One or more lysine residues are methylated.</text>
</comment>
<comment type="similarity">
    <text evidence="1">Belongs to the universal ribosomal protein uL11 family.</text>
</comment>
<proteinExistence type="inferred from homology"/>
<dbReference type="EMBL" id="CP000891">
    <property type="protein sequence ID" value="ABX47371.1"/>
    <property type="molecule type" value="Genomic_DNA"/>
</dbReference>
<dbReference type="RefSeq" id="WP_006083611.1">
    <property type="nucleotide sequence ID" value="NC_009997.1"/>
</dbReference>
<dbReference type="SMR" id="A9KW91"/>
<dbReference type="GeneID" id="11770549"/>
<dbReference type="KEGG" id="sbn:Sbal195_0189"/>
<dbReference type="HOGENOM" id="CLU_074237_2_0_6"/>
<dbReference type="Proteomes" id="UP000000770">
    <property type="component" value="Chromosome"/>
</dbReference>
<dbReference type="GO" id="GO:0022625">
    <property type="term" value="C:cytosolic large ribosomal subunit"/>
    <property type="evidence" value="ECO:0007669"/>
    <property type="project" value="TreeGrafter"/>
</dbReference>
<dbReference type="GO" id="GO:0070180">
    <property type="term" value="F:large ribosomal subunit rRNA binding"/>
    <property type="evidence" value="ECO:0007669"/>
    <property type="project" value="UniProtKB-UniRule"/>
</dbReference>
<dbReference type="GO" id="GO:0003735">
    <property type="term" value="F:structural constituent of ribosome"/>
    <property type="evidence" value="ECO:0007669"/>
    <property type="project" value="InterPro"/>
</dbReference>
<dbReference type="GO" id="GO:0006412">
    <property type="term" value="P:translation"/>
    <property type="evidence" value="ECO:0007669"/>
    <property type="project" value="UniProtKB-UniRule"/>
</dbReference>
<dbReference type="CDD" id="cd00349">
    <property type="entry name" value="Ribosomal_L11"/>
    <property type="match status" value="1"/>
</dbReference>
<dbReference type="FunFam" id="1.10.10.250:FF:000001">
    <property type="entry name" value="50S ribosomal protein L11"/>
    <property type="match status" value="1"/>
</dbReference>
<dbReference type="FunFam" id="3.30.1550.10:FF:000001">
    <property type="entry name" value="50S ribosomal protein L11"/>
    <property type="match status" value="1"/>
</dbReference>
<dbReference type="Gene3D" id="1.10.10.250">
    <property type="entry name" value="Ribosomal protein L11, C-terminal domain"/>
    <property type="match status" value="1"/>
</dbReference>
<dbReference type="Gene3D" id="3.30.1550.10">
    <property type="entry name" value="Ribosomal protein L11/L12, N-terminal domain"/>
    <property type="match status" value="1"/>
</dbReference>
<dbReference type="HAMAP" id="MF_00736">
    <property type="entry name" value="Ribosomal_uL11"/>
    <property type="match status" value="1"/>
</dbReference>
<dbReference type="InterPro" id="IPR000911">
    <property type="entry name" value="Ribosomal_uL11"/>
</dbReference>
<dbReference type="InterPro" id="IPR006519">
    <property type="entry name" value="Ribosomal_uL11_bac-typ"/>
</dbReference>
<dbReference type="InterPro" id="IPR020783">
    <property type="entry name" value="Ribosomal_uL11_C"/>
</dbReference>
<dbReference type="InterPro" id="IPR036769">
    <property type="entry name" value="Ribosomal_uL11_C_sf"/>
</dbReference>
<dbReference type="InterPro" id="IPR020785">
    <property type="entry name" value="Ribosomal_uL11_CS"/>
</dbReference>
<dbReference type="InterPro" id="IPR020784">
    <property type="entry name" value="Ribosomal_uL11_N"/>
</dbReference>
<dbReference type="InterPro" id="IPR036796">
    <property type="entry name" value="Ribosomal_uL11_N_sf"/>
</dbReference>
<dbReference type="NCBIfam" id="TIGR01632">
    <property type="entry name" value="L11_bact"/>
    <property type="match status" value="1"/>
</dbReference>
<dbReference type="PANTHER" id="PTHR11661">
    <property type="entry name" value="60S RIBOSOMAL PROTEIN L12"/>
    <property type="match status" value="1"/>
</dbReference>
<dbReference type="PANTHER" id="PTHR11661:SF1">
    <property type="entry name" value="LARGE RIBOSOMAL SUBUNIT PROTEIN UL11M"/>
    <property type="match status" value="1"/>
</dbReference>
<dbReference type="Pfam" id="PF00298">
    <property type="entry name" value="Ribosomal_L11"/>
    <property type="match status" value="1"/>
</dbReference>
<dbReference type="Pfam" id="PF03946">
    <property type="entry name" value="Ribosomal_L11_N"/>
    <property type="match status" value="1"/>
</dbReference>
<dbReference type="SMART" id="SM00649">
    <property type="entry name" value="RL11"/>
    <property type="match status" value="1"/>
</dbReference>
<dbReference type="SUPFAM" id="SSF54747">
    <property type="entry name" value="Ribosomal L11/L12e N-terminal domain"/>
    <property type="match status" value="1"/>
</dbReference>
<dbReference type="SUPFAM" id="SSF46906">
    <property type="entry name" value="Ribosomal protein L11, C-terminal domain"/>
    <property type="match status" value="1"/>
</dbReference>
<dbReference type="PROSITE" id="PS00359">
    <property type="entry name" value="RIBOSOMAL_L11"/>
    <property type="match status" value="1"/>
</dbReference>
<gene>
    <name evidence="1" type="primary">rplK</name>
    <name type="ordered locus">Sbal195_0189</name>
</gene>
<organism>
    <name type="scientific">Shewanella baltica (strain OS195)</name>
    <dbReference type="NCBI Taxonomy" id="399599"/>
    <lineage>
        <taxon>Bacteria</taxon>
        <taxon>Pseudomonadati</taxon>
        <taxon>Pseudomonadota</taxon>
        <taxon>Gammaproteobacteria</taxon>
        <taxon>Alteromonadales</taxon>
        <taxon>Shewanellaceae</taxon>
        <taxon>Shewanella</taxon>
    </lineage>
</organism>
<sequence length="142" mass="15138">MAKKIDAYIKLQVKSGSANPSPPVGPALGQKGVNIMEFCKAFNARTEKMEKGMPIPVVITVYSDRSFTFETKTSPASYLLKTAAGLKSGSPRPNTQKVGTIARAKVQEIAELKAADMTGADIEAMTRSIEGTARSMGLVVED</sequence>
<feature type="chain" id="PRO_1000083403" description="Large ribosomal subunit protein uL11">
    <location>
        <begin position="1"/>
        <end position="142"/>
    </location>
</feature>
<protein>
    <recommendedName>
        <fullName evidence="1">Large ribosomal subunit protein uL11</fullName>
    </recommendedName>
    <alternativeName>
        <fullName evidence="2">50S ribosomal protein L11</fullName>
    </alternativeName>
</protein>
<accession>A9KW91</accession>
<name>RL11_SHEB9</name>
<evidence type="ECO:0000255" key="1">
    <source>
        <dbReference type="HAMAP-Rule" id="MF_00736"/>
    </source>
</evidence>
<evidence type="ECO:0000305" key="2"/>
<reference key="1">
    <citation type="submission" date="2007-11" db="EMBL/GenBank/DDBJ databases">
        <title>Complete sequence of chromosome of Shewanella baltica OS195.</title>
        <authorList>
            <consortium name="US DOE Joint Genome Institute"/>
            <person name="Copeland A."/>
            <person name="Lucas S."/>
            <person name="Lapidus A."/>
            <person name="Barry K."/>
            <person name="Glavina del Rio T."/>
            <person name="Dalin E."/>
            <person name="Tice H."/>
            <person name="Pitluck S."/>
            <person name="Chain P."/>
            <person name="Malfatti S."/>
            <person name="Shin M."/>
            <person name="Vergez L."/>
            <person name="Schmutz J."/>
            <person name="Larimer F."/>
            <person name="Land M."/>
            <person name="Hauser L."/>
            <person name="Kyrpides N."/>
            <person name="Kim E."/>
            <person name="Brettar I."/>
            <person name="Rodrigues J."/>
            <person name="Konstantinidis K."/>
            <person name="Klappenbach J."/>
            <person name="Hofle M."/>
            <person name="Tiedje J."/>
            <person name="Richardson P."/>
        </authorList>
    </citation>
    <scope>NUCLEOTIDE SEQUENCE [LARGE SCALE GENOMIC DNA]</scope>
    <source>
        <strain>OS195</strain>
    </source>
</reference>